<gene>
    <name type="primary">rplJ</name>
</gene>
<proteinExistence type="inferred from homology"/>
<keyword id="KW-0687">Ribonucleoprotein</keyword>
<keyword id="KW-0689">Ribosomal protein</keyword>
<keyword id="KW-0694">RNA-binding</keyword>
<keyword id="KW-0699">rRNA-binding</keyword>
<accession>P48953</accession>
<name>RL10_STRVG</name>
<sequence length="186" mass="19592">MPTPNKAASVAELKDAFQSSNAAVLTEYRGLTVAQLKTLRRSLGENAQYAVVKNTLTKIAANQAGITALDEHFAGPTAVAFITGDPVESAKSLRDFAKDNPNLIIKAGVLDGKALTADEIKKLADLESREVLLSKLAGAFKGKQSQAASLFQALPSKFVRTAKRFASSSPSRAVPSNSARALIHAA</sequence>
<comment type="function">
    <text evidence="1">Forms part of the ribosomal stalk, playing a central role in the interaction of the ribosome with GTP-bound translation factors.</text>
</comment>
<comment type="subunit">
    <text evidence="1">Part of the ribosomal stalk of the 50S ribosomal subunit. The N-terminus interacts with L11 and the large rRNA to form the base of the stalk. The C-terminus forms an elongated spine to which L12 dimers bind in a sequential fashion forming a multimeric L10(L12)X complex (By similarity).</text>
</comment>
<comment type="similarity">
    <text evidence="2">Belongs to the universal ribosomal protein uL10 family.</text>
</comment>
<protein>
    <recommendedName>
        <fullName evidence="2">Large ribosomal subunit protein uL10</fullName>
    </recommendedName>
    <alternativeName>
        <fullName>50S ribosomal protein L10</fullName>
    </alternativeName>
</protein>
<reference key="1">
    <citation type="journal article" date="1996" name="Gene">
        <title>Gene organization in the ada-rplL region of Streptomyces virginiae.</title>
        <authorList>
            <person name="Katayama M."/>
            <person name="Sakai Y."/>
            <person name="Okamoto S."/>
            <person name="Ihara F."/>
            <person name="Nihira T."/>
            <person name="Yamada Y."/>
        </authorList>
    </citation>
    <scope>NUCLEOTIDE SEQUENCE [GENOMIC DNA]</scope>
</reference>
<dbReference type="EMBL" id="D50624">
    <property type="protein sequence ID" value="BAA09304.1"/>
    <property type="molecule type" value="Genomic_DNA"/>
</dbReference>
<dbReference type="PIR" id="T11791">
    <property type="entry name" value="T11791"/>
</dbReference>
<dbReference type="SMR" id="P48953"/>
<dbReference type="eggNOG" id="COG0244">
    <property type="taxonomic scope" value="Bacteria"/>
</dbReference>
<dbReference type="GO" id="GO:0015934">
    <property type="term" value="C:large ribosomal subunit"/>
    <property type="evidence" value="ECO:0007669"/>
    <property type="project" value="InterPro"/>
</dbReference>
<dbReference type="GO" id="GO:0070180">
    <property type="term" value="F:large ribosomal subunit rRNA binding"/>
    <property type="evidence" value="ECO:0007669"/>
    <property type="project" value="UniProtKB-UniRule"/>
</dbReference>
<dbReference type="GO" id="GO:0003735">
    <property type="term" value="F:structural constituent of ribosome"/>
    <property type="evidence" value="ECO:0007669"/>
    <property type="project" value="InterPro"/>
</dbReference>
<dbReference type="GO" id="GO:0006412">
    <property type="term" value="P:translation"/>
    <property type="evidence" value="ECO:0007669"/>
    <property type="project" value="UniProtKB-UniRule"/>
</dbReference>
<dbReference type="CDD" id="cd05797">
    <property type="entry name" value="Ribosomal_L10"/>
    <property type="match status" value="1"/>
</dbReference>
<dbReference type="FunFam" id="3.30.70.1730:FF:000003">
    <property type="entry name" value="50S ribosomal protein L10"/>
    <property type="match status" value="1"/>
</dbReference>
<dbReference type="Gene3D" id="3.30.70.1730">
    <property type="match status" value="1"/>
</dbReference>
<dbReference type="HAMAP" id="MF_00362">
    <property type="entry name" value="Ribosomal_uL10"/>
    <property type="match status" value="1"/>
</dbReference>
<dbReference type="InterPro" id="IPR001790">
    <property type="entry name" value="Ribosomal_uL10"/>
</dbReference>
<dbReference type="InterPro" id="IPR043141">
    <property type="entry name" value="Ribosomal_uL10-like_sf"/>
</dbReference>
<dbReference type="InterPro" id="IPR022973">
    <property type="entry name" value="Ribosomal_uL10_bac"/>
</dbReference>
<dbReference type="InterPro" id="IPR047865">
    <property type="entry name" value="Ribosomal_uL10_bac_type"/>
</dbReference>
<dbReference type="InterPro" id="IPR002363">
    <property type="entry name" value="Ribosomal_uL10_CS_bac"/>
</dbReference>
<dbReference type="NCBIfam" id="NF000955">
    <property type="entry name" value="PRK00099.1-1"/>
    <property type="match status" value="1"/>
</dbReference>
<dbReference type="PANTHER" id="PTHR11560">
    <property type="entry name" value="39S RIBOSOMAL PROTEIN L10, MITOCHONDRIAL"/>
    <property type="match status" value="1"/>
</dbReference>
<dbReference type="Pfam" id="PF00466">
    <property type="entry name" value="Ribosomal_L10"/>
    <property type="match status" value="1"/>
</dbReference>
<dbReference type="SUPFAM" id="SSF160369">
    <property type="entry name" value="Ribosomal protein L10-like"/>
    <property type="match status" value="1"/>
</dbReference>
<dbReference type="PROSITE" id="PS01109">
    <property type="entry name" value="RIBOSOMAL_L10"/>
    <property type="match status" value="1"/>
</dbReference>
<organism>
    <name type="scientific">Streptomyces virginiae</name>
    <name type="common">Streptomyces cinnamonensis</name>
    <dbReference type="NCBI Taxonomy" id="1961"/>
    <lineage>
        <taxon>Bacteria</taxon>
        <taxon>Bacillati</taxon>
        <taxon>Actinomycetota</taxon>
        <taxon>Actinomycetes</taxon>
        <taxon>Kitasatosporales</taxon>
        <taxon>Streptomycetaceae</taxon>
        <taxon>Streptomyces</taxon>
    </lineage>
</organism>
<feature type="chain" id="PRO_0000154728" description="Large ribosomal subunit protein uL10">
    <location>
        <begin position="1"/>
        <end position="186"/>
    </location>
</feature>
<evidence type="ECO:0000250" key="1"/>
<evidence type="ECO:0000305" key="2"/>